<evidence type="ECO:0000255" key="1">
    <source>
        <dbReference type="HAMAP-Rule" id="MF_01326"/>
    </source>
</evidence>
<evidence type="ECO:0000305" key="2"/>
<reference key="1">
    <citation type="submission" date="2008-05" db="EMBL/GenBank/DDBJ databases">
        <title>Complete sequence of chromosome 1 of Ralstonia pickettii 12J.</title>
        <authorList>
            <person name="Lucas S."/>
            <person name="Copeland A."/>
            <person name="Lapidus A."/>
            <person name="Glavina del Rio T."/>
            <person name="Dalin E."/>
            <person name="Tice H."/>
            <person name="Bruce D."/>
            <person name="Goodwin L."/>
            <person name="Pitluck S."/>
            <person name="Meincke L."/>
            <person name="Brettin T."/>
            <person name="Detter J.C."/>
            <person name="Han C."/>
            <person name="Kuske C.R."/>
            <person name="Schmutz J."/>
            <person name="Larimer F."/>
            <person name="Land M."/>
            <person name="Hauser L."/>
            <person name="Kyrpides N."/>
            <person name="Mikhailova N."/>
            <person name="Marsh T."/>
            <person name="Richardson P."/>
        </authorList>
    </citation>
    <scope>NUCLEOTIDE SEQUENCE [LARGE SCALE GENOMIC DNA]</scope>
    <source>
        <strain>12J</strain>
    </source>
</reference>
<accession>B2UEK8</accession>
<name>RL24_RALPJ</name>
<keyword id="KW-0687">Ribonucleoprotein</keyword>
<keyword id="KW-0689">Ribosomal protein</keyword>
<keyword id="KW-0694">RNA-binding</keyword>
<keyword id="KW-0699">rRNA-binding</keyword>
<feature type="chain" id="PRO_1000142026" description="Large ribosomal subunit protein uL24">
    <location>
        <begin position="1"/>
        <end position="102"/>
    </location>
</feature>
<gene>
    <name evidence="1" type="primary">rplX</name>
    <name type="ordered locus">Rpic_3286</name>
</gene>
<proteinExistence type="inferred from homology"/>
<sequence>MNKIRKGDRVIVRTGKDKGKQGTVLAVLAEHVTVEGVNVAKKHVRPNPMLGTTGGVVDKIMPIHISNVALVDANGKPSRVGIKVEGGVKTRVLKTTGAAVGA</sequence>
<protein>
    <recommendedName>
        <fullName evidence="1">Large ribosomal subunit protein uL24</fullName>
    </recommendedName>
    <alternativeName>
        <fullName evidence="2">50S ribosomal protein L24</fullName>
    </alternativeName>
</protein>
<organism>
    <name type="scientific">Ralstonia pickettii (strain 12J)</name>
    <dbReference type="NCBI Taxonomy" id="402626"/>
    <lineage>
        <taxon>Bacteria</taxon>
        <taxon>Pseudomonadati</taxon>
        <taxon>Pseudomonadota</taxon>
        <taxon>Betaproteobacteria</taxon>
        <taxon>Burkholderiales</taxon>
        <taxon>Burkholderiaceae</taxon>
        <taxon>Ralstonia</taxon>
    </lineage>
</organism>
<comment type="function">
    <text evidence="1">One of two assembly initiator proteins, it binds directly to the 5'-end of the 23S rRNA, where it nucleates assembly of the 50S subunit.</text>
</comment>
<comment type="function">
    <text evidence="1">One of the proteins that surrounds the polypeptide exit tunnel on the outside of the subunit.</text>
</comment>
<comment type="subunit">
    <text evidence="1">Part of the 50S ribosomal subunit.</text>
</comment>
<comment type="similarity">
    <text evidence="1">Belongs to the universal ribosomal protein uL24 family.</text>
</comment>
<dbReference type="EMBL" id="CP001068">
    <property type="protein sequence ID" value="ACD28408.1"/>
    <property type="molecule type" value="Genomic_DNA"/>
</dbReference>
<dbReference type="SMR" id="B2UEK8"/>
<dbReference type="STRING" id="402626.Rpic_3286"/>
<dbReference type="KEGG" id="rpi:Rpic_3286"/>
<dbReference type="eggNOG" id="COG0198">
    <property type="taxonomic scope" value="Bacteria"/>
</dbReference>
<dbReference type="HOGENOM" id="CLU_093315_2_2_4"/>
<dbReference type="GO" id="GO:1990904">
    <property type="term" value="C:ribonucleoprotein complex"/>
    <property type="evidence" value="ECO:0007669"/>
    <property type="project" value="UniProtKB-KW"/>
</dbReference>
<dbReference type="GO" id="GO:0005840">
    <property type="term" value="C:ribosome"/>
    <property type="evidence" value="ECO:0007669"/>
    <property type="project" value="UniProtKB-KW"/>
</dbReference>
<dbReference type="GO" id="GO:0019843">
    <property type="term" value="F:rRNA binding"/>
    <property type="evidence" value="ECO:0007669"/>
    <property type="project" value="UniProtKB-UniRule"/>
</dbReference>
<dbReference type="GO" id="GO:0003735">
    <property type="term" value="F:structural constituent of ribosome"/>
    <property type="evidence" value="ECO:0007669"/>
    <property type="project" value="InterPro"/>
</dbReference>
<dbReference type="GO" id="GO:0006412">
    <property type="term" value="P:translation"/>
    <property type="evidence" value="ECO:0007669"/>
    <property type="project" value="UniProtKB-UniRule"/>
</dbReference>
<dbReference type="CDD" id="cd06089">
    <property type="entry name" value="KOW_RPL26"/>
    <property type="match status" value="1"/>
</dbReference>
<dbReference type="Gene3D" id="2.30.30.30">
    <property type="match status" value="1"/>
</dbReference>
<dbReference type="HAMAP" id="MF_01326_B">
    <property type="entry name" value="Ribosomal_uL24_B"/>
    <property type="match status" value="1"/>
</dbReference>
<dbReference type="InterPro" id="IPR005824">
    <property type="entry name" value="KOW"/>
</dbReference>
<dbReference type="InterPro" id="IPR014722">
    <property type="entry name" value="Rib_uL2_dom2"/>
</dbReference>
<dbReference type="InterPro" id="IPR003256">
    <property type="entry name" value="Ribosomal_uL24"/>
</dbReference>
<dbReference type="InterPro" id="IPR041988">
    <property type="entry name" value="Ribosomal_uL24_KOW"/>
</dbReference>
<dbReference type="InterPro" id="IPR008991">
    <property type="entry name" value="Translation_prot_SH3-like_sf"/>
</dbReference>
<dbReference type="NCBIfam" id="TIGR01079">
    <property type="entry name" value="rplX_bact"/>
    <property type="match status" value="1"/>
</dbReference>
<dbReference type="PANTHER" id="PTHR12903">
    <property type="entry name" value="MITOCHONDRIAL RIBOSOMAL PROTEIN L24"/>
    <property type="match status" value="1"/>
</dbReference>
<dbReference type="Pfam" id="PF00467">
    <property type="entry name" value="KOW"/>
    <property type="match status" value="1"/>
</dbReference>
<dbReference type="Pfam" id="PF17136">
    <property type="entry name" value="ribosomal_L24"/>
    <property type="match status" value="1"/>
</dbReference>
<dbReference type="SMART" id="SM00739">
    <property type="entry name" value="KOW"/>
    <property type="match status" value="1"/>
</dbReference>
<dbReference type="SUPFAM" id="SSF50104">
    <property type="entry name" value="Translation proteins SH3-like domain"/>
    <property type="match status" value="1"/>
</dbReference>